<organism>
    <name type="scientific">Bacteroides fragilis (strain YCH46)</name>
    <dbReference type="NCBI Taxonomy" id="295405"/>
    <lineage>
        <taxon>Bacteria</taxon>
        <taxon>Pseudomonadati</taxon>
        <taxon>Bacteroidota</taxon>
        <taxon>Bacteroidia</taxon>
        <taxon>Bacteroidales</taxon>
        <taxon>Bacteroidaceae</taxon>
        <taxon>Bacteroides</taxon>
    </lineage>
</organism>
<reference key="1">
    <citation type="journal article" date="2004" name="Proc. Natl. Acad. Sci. U.S.A.">
        <title>Genomic analysis of Bacteroides fragilis reveals extensive DNA inversions regulating cell surface adaptation.</title>
        <authorList>
            <person name="Kuwahara T."/>
            <person name="Yamashita A."/>
            <person name="Hirakawa H."/>
            <person name="Nakayama H."/>
            <person name="Toh H."/>
            <person name="Okada N."/>
            <person name="Kuhara S."/>
            <person name="Hattori M."/>
            <person name="Hayashi T."/>
            <person name="Ohnishi Y."/>
        </authorList>
    </citation>
    <scope>NUCLEOTIDE SEQUENCE [LARGE SCALE GENOMIC DNA]</scope>
    <source>
        <strain>YCH46</strain>
    </source>
</reference>
<dbReference type="EC" id="2.7.7.4" evidence="1"/>
<dbReference type="EMBL" id="AP006841">
    <property type="protein sequence ID" value="BAD48416.1"/>
    <property type="molecule type" value="Genomic_DNA"/>
</dbReference>
<dbReference type="RefSeq" id="WP_005776455.1">
    <property type="nucleotide sequence ID" value="NZ_UYXF01000008.1"/>
</dbReference>
<dbReference type="RefSeq" id="YP_098950.1">
    <property type="nucleotide sequence ID" value="NC_006347.1"/>
</dbReference>
<dbReference type="SMR" id="Q64VR0"/>
<dbReference type="STRING" id="295405.BF1668"/>
<dbReference type="GeneID" id="93107224"/>
<dbReference type="KEGG" id="bfr:BF1668"/>
<dbReference type="PATRIC" id="fig|295405.11.peg.1619"/>
<dbReference type="HOGENOM" id="CLU_043026_0_0_10"/>
<dbReference type="OrthoDB" id="9772604at2"/>
<dbReference type="UniPathway" id="UPA00140">
    <property type="reaction ID" value="UER00204"/>
</dbReference>
<dbReference type="Proteomes" id="UP000002197">
    <property type="component" value="Chromosome"/>
</dbReference>
<dbReference type="GO" id="GO:0005524">
    <property type="term" value="F:ATP binding"/>
    <property type="evidence" value="ECO:0007669"/>
    <property type="project" value="UniProtKB-KW"/>
</dbReference>
<dbReference type="GO" id="GO:0004781">
    <property type="term" value="F:sulfate adenylyltransferase (ATP) activity"/>
    <property type="evidence" value="ECO:0007669"/>
    <property type="project" value="UniProtKB-UniRule"/>
</dbReference>
<dbReference type="GO" id="GO:0070814">
    <property type="term" value="P:hydrogen sulfide biosynthetic process"/>
    <property type="evidence" value="ECO:0007669"/>
    <property type="project" value="UniProtKB-UniRule"/>
</dbReference>
<dbReference type="GO" id="GO:0000103">
    <property type="term" value="P:sulfate assimilation"/>
    <property type="evidence" value="ECO:0007669"/>
    <property type="project" value="UniProtKB-UniRule"/>
</dbReference>
<dbReference type="CDD" id="cd23946">
    <property type="entry name" value="Sulfate_adenylyltransferase_2"/>
    <property type="match status" value="1"/>
</dbReference>
<dbReference type="FunFam" id="3.40.50.620:FF:000002">
    <property type="entry name" value="Sulfate adenylyltransferase subunit 2"/>
    <property type="match status" value="1"/>
</dbReference>
<dbReference type="Gene3D" id="3.40.50.620">
    <property type="entry name" value="HUPs"/>
    <property type="match status" value="1"/>
</dbReference>
<dbReference type="HAMAP" id="MF_00064">
    <property type="entry name" value="Sulf_adenylyltr_sub2"/>
    <property type="match status" value="1"/>
</dbReference>
<dbReference type="InterPro" id="IPR002500">
    <property type="entry name" value="PAPS_reduct_dom"/>
</dbReference>
<dbReference type="InterPro" id="IPR014729">
    <property type="entry name" value="Rossmann-like_a/b/a_fold"/>
</dbReference>
<dbReference type="InterPro" id="IPR011784">
    <property type="entry name" value="SO4_adenylTrfase_ssu"/>
</dbReference>
<dbReference type="InterPro" id="IPR050128">
    <property type="entry name" value="Sulfate_adenylyltrnsfr_sub2"/>
</dbReference>
<dbReference type="NCBIfam" id="TIGR02039">
    <property type="entry name" value="CysD"/>
    <property type="match status" value="1"/>
</dbReference>
<dbReference type="NCBIfam" id="NF003587">
    <property type="entry name" value="PRK05253.1"/>
    <property type="match status" value="1"/>
</dbReference>
<dbReference type="NCBIfam" id="NF009214">
    <property type="entry name" value="PRK12563.1"/>
    <property type="match status" value="1"/>
</dbReference>
<dbReference type="PANTHER" id="PTHR43196">
    <property type="entry name" value="SULFATE ADENYLYLTRANSFERASE SUBUNIT 2"/>
    <property type="match status" value="1"/>
</dbReference>
<dbReference type="PANTHER" id="PTHR43196:SF1">
    <property type="entry name" value="SULFATE ADENYLYLTRANSFERASE SUBUNIT 2"/>
    <property type="match status" value="1"/>
</dbReference>
<dbReference type="Pfam" id="PF01507">
    <property type="entry name" value="PAPS_reduct"/>
    <property type="match status" value="1"/>
</dbReference>
<dbReference type="PIRSF" id="PIRSF002936">
    <property type="entry name" value="CysDAde_trans"/>
    <property type="match status" value="1"/>
</dbReference>
<dbReference type="SUPFAM" id="SSF52402">
    <property type="entry name" value="Adenine nucleotide alpha hydrolases-like"/>
    <property type="match status" value="1"/>
</dbReference>
<feature type="chain" id="PRO_0000340178" description="Sulfate adenylyltransferase subunit 2">
    <location>
        <begin position="1"/>
        <end position="303"/>
    </location>
</feature>
<sequence length="303" mass="35840">MKEEYKLSHLKELEAESIHIIREVAAEFENPVMLYSIGKDSSVMVRLAEKAFYPGKVPFPLMHIDSKWKFKEMIQFRDEYAKKYGWNLIVESNMEAFHAGVGPFTHGSKVHTDLMKTQALLRALDKYKFDAAFGGARRDEEKSRAKERIFSFRDKFHQWDPKNQRPELWDIYNARVHKGESIRVFPLSNWTELDIWQYIRLENIPIVPLYYAKERPVVQMDGNLIMADDERLPEKYRDQIEMKMVRFRTLGCWPLTGAVESEADTIEKIVEEMMTTTKSERTTRVIDFDQEGSMEQKKREGYF</sequence>
<gene>
    <name evidence="1" type="primary">cysD</name>
    <name type="ordered locus">BF1668</name>
</gene>
<protein>
    <recommendedName>
        <fullName evidence="1">Sulfate adenylyltransferase subunit 2</fullName>
        <ecNumber evidence="1">2.7.7.4</ecNumber>
    </recommendedName>
    <alternativeName>
        <fullName evidence="1">ATP-sulfurylase small subunit</fullName>
    </alternativeName>
    <alternativeName>
        <fullName evidence="1">Sulfate adenylate transferase</fullName>
        <shortName evidence="1">SAT</shortName>
    </alternativeName>
</protein>
<evidence type="ECO:0000255" key="1">
    <source>
        <dbReference type="HAMAP-Rule" id="MF_00064"/>
    </source>
</evidence>
<keyword id="KW-0067">ATP-binding</keyword>
<keyword id="KW-0547">Nucleotide-binding</keyword>
<keyword id="KW-0548">Nucleotidyltransferase</keyword>
<keyword id="KW-0808">Transferase</keyword>
<name>CYSD_BACFR</name>
<accession>Q64VR0</accession>
<comment type="function">
    <text evidence="1">With CysN forms the ATP sulfurylase (ATPS) that catalyzes the adenylation of sulfate producing adenosine 5'-phosphosulfate (APS) and diphosphate, the first enzymatic step in sulfur assimilation pathway. APS synthesis involves the formation of a high-energy phosphoric-sulfuric acid anhydride bond driven by GTP hydrolysis by CysN coupled to ATP hydrolysis by CysD.</text>
</comment>
<comment type="catalytic activity">
    <reaction evidence="1">
        <text>sulfate + ATP + H(+) = adenosine 5'-phosphosulfate + diphosphate</text>
        <dbReference type="Rhea" id="RHEA:18133"/>
        <dbReference type="ChEBI" id="CHEBI:15378"/>
        <dbReference type="ChEBI" id="CHEBI:16189"/>
        <dbReference type="ChEBI" id="CHEBI:30616"/>
        <dbReference type="ChEBI" id="CHEBI:33019"/>
        <dbReference type="ChEBI" id="CHEBI:58243"/>
        <dbReference type="EC" id="2.7.7.4"/>
    </reaction>
</comment>
<comment type="pathway">
    <text evidence="1">Sulfur metabolism; hydrogen sulfide biosynthesis; sulfite from sulfate: step 1/3.</text>
</comment>
<comment type="subunit">
    <text evidence="1">Heterodimer composed of CysD, the smaller subunit, and CysN.</text>
</comment>
<comment type="similarity">
    <text evidence="1">Belongs to the PAPS reductase family. CysD subfamily.</text>
</comment>
<proteinExistence type="inferred from homology"/>